<reference key="1">
    <citation type="journal article" date="2001" name="J. Bacteriol.">
        <title>Genome of the bacterium Streptococcus pneumoniae strain R6.</title>
        <authorList>
            <person name="Hoskins J."/>
            <person name="Alborn W.E. Jr."/>
            <person name="Arnold J."/>
            <person name="Blaszczak L.C."/>
            <person name="Burgett S."/>
            <person name="DeHoff B.S."/>
            <person name="Estrem S.T."/>
            <person name="Fritz L."/>
            <person name="Fu D.-J."/>
            <person name="Fuller W."/>
            <person name="Geringer C."/>
            <person name="Gilmour R."/>
            <person name="Glass J.S."/>
            <person name="Khoja H."/>
            <person name="Kraft A.R."/>
            <person name="Lagace R.E."/>
            <person name="LeBlanc D.J."/>
            <person name="Lee L.N."/>
            <person name="Lefkowitz E.J."/>
            <person name="Lu J."/>
            <person name="Matsushima P."/>
            <person name="McAhren S.M."/>
            <person name="McHenney M."/>
            <person name="McLeaster K."/>
            <person name="Mundy C.W."/>
            <person name="Nicas T.I."/>
            <person name="Norris F.H."/>
            <person name="O'Gara M."/>
            <person name="Peery R.B."/>
            <person name="Robertson G.T."/>
            <person name="Rockey P."/>
            <person name="Sun P.-M."/>
            <person name="Winkler M.E."/>
            <person name="Yang Y."/>
            <person name="Young-Bellido M."/>
            <person name="Zhao G."/>
            <person name="Zook C.A."/>
            <person name="Baltz R.H."/>
            <person name="Jaskunas S.R."/>
            <person name="Rosteck P.R. Jr."/>
            <person name="Skatrud P.L."/>
            <person name="Glass J.I."/>
        </authorList>
    </citation>
    <scope>NUCLEOTIDE SEQUENCE [LARGE SCALE GENOMIC DNA]</scope>
    <source>
        <strain>ATCC BAA-255 / R6</strain>
    </source>
</reference>
<accession>Q8DPC2</accession>
<feature type="chain" id="PRO_0000286303" description="Spermidine/putrescine import ATP-binding protein PotA">
    <location>
        <begin position="1"/>
        <end position="385"/>
    </location>
</feature>
<feature type="domain" description="ABC transporter" evidence="1">
    <location>
        <begin position="6"/>
        <end position="238"/>
    </location>
</feature>
<feature type="binding site" evidence="1">
    <location>
        <begin position="40"/>
        <end position="47"/>
    </location>
    <ligand>
        <name>ATP</name>
        <dbReference type="ChEBI" id="CHEBI:30616"/>
    </ligand>
</feature>
<gene>
    <name evidence="1" type="primary">potA</name>
    <name type="ordered locus">spr1246</name>
</gene>
<comment type="function">
    <text evidence="1">Part of the ABC transporter complex PotABCD involved in spermidine/putrescine import. Responsible for energy coupling to the transport system.</text>
</comment>
<comment type="catalytic activity">
    <reaction evidence="1">
        <text>ATP + H2O + polyamine-[polyamine-binding protein]Side 1 = ADP + phosphate + polyamineSide 2 + [polyamine-binding protein]Side 1.</text>
        <dbReference type="EC" id="7.6.2.11"/>
    </reaction>
</comment>
<comment type="subunit">
    <text evidence="1">The complex is composed of two ATP-binding proteins (PotA), two transmembrane proteins (PotB and PotC) and a solute-binding protein (PotD).</text>
</comment>
<comment type="subcellular location">
    <subcellularLocation>
        <location evidence="1">Cell membrane</location>
        <topology evidence="1">Peripheral membrane protein</topology>
    </subcellularLocation>
</comment>
<comment type="similarity">
    <text evidence="1">Belongs to the ABC transporter superfamily. Spermidine/putrescine importer (TC 3.A.1.11.1) family.</text>
</comment>
<evidence type="ECO:0000255" key="1">
    <source>
        <dbReference type="HAMAP-Rule" id="MF_01726"/>
    </source>
</evidence>
<name>POTA_STRR6</name>
<proteinExistence type="inferred from homology"/>
<organism>
    <name type="scientific">Streptococcus pneumoniae (strain ATCC BAA-255 / R6)</name>
    <dbReference type="NCBI Taxonomy" id="171101"/>
    <lineage>
        <taxon>Bacteria</taxon>
        <taxon>Bacillati</taxon>
        <taxon>Bacillota</taxon>
        <taxon>Bacilli</taxon>
        <taxon>Lactobacillales</taxon>
        <taxon>Streptococcaceae</taxon>
        <taxon>Streptococcus</taxon>
    </lineage>
</organism>
<protein>
    <recommendedName>
        <fullName evidence="1">Spermidine/putrescine import ATP-binding protein PotA</fullName>
        <ecNumber evidence="1">7.6.2.11</ecNumber>
    </recommendedName>
</protein>
<keyword id="KW-0067">ATP-binding</keyword>
<keyword id="KW-1003">Cell membrane</keyword>
<keyword id="KW-0472">Membrane</keyword>
<keyword id="KW-0547">Nucleotide-binding</keyword>
<keyword id="KW-1185">Reference proteome</keyword>
<keyword id="KW-1278">Translocase</keyword>
<keyword id="KW-0813">Transport</keyword>
<sequence>MKKPIIEFKNVSKVFEDSNTKVLKDINFELEEGKFYTLLGASGSGKSTILNIIAGLLDATTGDIMLDGVRINDIPTNKRDVHTVFQSYALFPHMNVFENVAFPLRLRKIDKKEIEQRVAEVLKMVQLEGYEKRSIRKLSGGQRQRVAIARAIINQPRVVLLDEPLSALDLKLRTDMQYELRELQQRLGITFVFVTHDQEEALAMSDWIFVMNDGEIVQSGTPVDIYDEPINHFVATFIGESNILPGTMIEDYLVEFNGKRFEAVDGGMKPNEPVEVVIRPEDLRITLPEEGKLQVKVDTQLFRGVHYEIIAYDELGNEWMIHSTRKAIVGEEIGLDFEPEDIHIMRLNETEEEFDARIEEYVEIEEQEAGLINAIEEERDEENKL</sequence>
<dbReference type="EC" id="7.6.2.11" evidence="1"/>
<dbReference type="EMBL" id="AE007317">
    <property type="protein sequence ID" value="AAL00050.1"/>
    <property type="molecule type" value="Genomic_DNA"/>
</dbReference>
<dbReference type="PIR" id="E98027">
    <property type="entry name" value="E98027"/>
</dbReference>
<dbReference type="RefSeq" id="NP_358839.1">
    <property type="nucleotide sequence ID" value="NC_003098.1"/>
</dbReference>
<dbReference type="RefSeq" id="WP_000742913.1">
    <property type="nucleotide sequence ID" value="NC_003098.1"/>
</dbReference>
<dbReference type="SMR" id="Q8DPC2"/>
<dbReference type="STRING" id="171101.spr1246"/>
<dbReference type="KEGG" id="spr:spr1246"/>
<dbReference type="PATRIC" id="fig|171101.6.peg.1351"/>
<dbReference type="eggNOG" id="COG3842">
    <property type="taxonomic scope" value="Bacteria"/>
</dbReference>
<dbReference type="HOGENOM" id="CLU_000604_1_1_9"/>
<dbReference type="PHI-base" id="PHI:6319"/>
<dbReference type="Proteomes" id="UP000000586">
    <property type="component" value="Chromosome"/>
</dbReference>
<dbReference type="GO" id="GO:0043190">
    <property type="term" value="C:ATP-binding cassette (ABC) transporter complex"/>
    <property type="evidence" value="ECO:0007669"/>
    <property type="project" value="InterPro"/>
</dbReference>
<dbReference type="GO" id="GO:0015417">
    <property type="term" value="F:ABC-type polyamine transporter activity"/>
    <property type="evidence" value="ECO:0007669"/>
    <property type="project" value="UniProtKB-EC"/>
</dbReference>
<dbReference type="GO" id="GO:0005524">
    <property type="term" value="F:ATP binding"/>
    <property type="evidence" value="ECO:0007669"/>
    <property type="project" value="UniProtKB-KW"/>
</dbReference>
<dbReference type="GO" id="GO:0016887">
    <property type="term" value="F:ATP hydrolysis activity"/>
    <property type="evidence" value="ECO:0007669"/>
    <property type="project" value="InterPro"/>
</dbReference>
<dbReference type="FunFam" id="3.40.50.300:FF:000042">
    <property type="entry name" value="Maltose/maltodextrin ABC transporter, ATP-binding protein"/>
    <property type="match status" value="1"/>
</dbReference>
<dbReference type="Gene3D" id="2.40.50.100">
    <property type="match status" value="1"/>
</dbReference>
<dbReference type="Gene3D" id="3.40.50.300">
    <property type="entry name" value="P-loop containing nucleotide triphosphate hydrolases"/>
    <property type="match status" value="1"/>
</dbReference>
<dbReference type="InterPro" id="IPR003593">
    <property type="entry name" value="AAA+_ATPase"/>
</dbReference>
<dbReference type="InterPro" id="IPR050093">
    <property type="entry name" value="ABC_SmlMolc_Importer"/>
</dbReference>
<dbReference type="InterPro" id="IPR003439">
    <property type="entry name" value="ABC_transporter-like_ATP-bd"/>
</dbReference>
<dbReference type="InterPro" id="IPR017871">
    <property type="entry name" value="ABC_transporter-like_CS"/>
</dbReference>
<dbReference type="InterPro" id="IPR008995">
    <property type="entry name" value="Mo/tungstate-bd_C_term_dom"/>
</dbReference>
<dbReference type="InterPro" id="IPR027417">
    <property type="entry name" value="P-loop_NTPase"/>
</dbReference>
<dbReference type="InterPro" id="IPR005893">
    <property type="entry name" value="PotA-like"/>
</dbReference>
<dbReference type="InterPro" id="IPR013611">
    <property type="entry name" value="Transp-assoc_OB_typ2"/>
</dbReference>
<dbReference type="NCBIfam" id="TIGR01187">
    <property type="entry name" value="potA"/>
    <property type="match status" value="1"/>
</dbReference>
<dbReference type="PANTHER" id="PTHR42781">
    <property type="entry name" value="SPERMIDINE/PUTRESCINE IMPORT ATP-BINDING PROTEIN POTA"/>
    <property type="match status" value="1"/>
</dbReference>
<dbReference type="PANTHER" id="PTHR42781:SF4">
    <property type="entry name" value="SPERMIDINE_PUTRESCINE IMPORT ATP-BINDING PROTEIN POTA"/>
    <property type="match status" value="1"/>
</dbReference>
<dbReference type="Pfam" id="PF00005">
    <property type="entry name" value="ABC_tran"/>
    <property type="match status" value="1"/>
</dbReference>
<dbReference type="Pfam" id="PF08402">
    <property type="entry name" value="TOBE_2"/>
    <property type="match status" value="1"/>
</dbReference>
<dbReference type="SMART" id="SM00382">
    <property type="entry name" value="AAA"/>
    <property type="match status" value="1"/>
</dbReference>
<dbReference type="SUPFAM" id="SSF50331">
    <property type="entry name" value="MOP-like"/>
    <property type="match status" value="1"/>
</dbReference>
<dbReference type="SUPFAM" id="SSF52540">
    <property type="entry name" value="P-loop containing nucleoside triphosphate hydrolases"/>
    <property type="match status" value="1"/>
</dbReference>
<dbReference type="PROSITE" id="PS00211">
    <property type="entry name" value="ABC_TRANSPORTER_1"/>
    <property type="match status" value="1"/>
</dbReference>
<dbReference type="PROSITE" id="PS50893">
    <property type="entry name" value="ABC_TRANSPORTER_2"/>
    <property type="match status" value="1"/>
</dbReference>
<dbReference type="PROSITE" id="PS51305">
    <property type="entry name" value="POTA"/>
    <property type="match status" value="1"/>
</dbReference>